<proteinExistence type="evidence at protein level"/>
<accession>A0R3Y2</accession>
<accession>I7GEK0</accession>
<name>CTPE_MYCS2</name>
<reference key="1">
    <citation type="submission" date="2006-10" db="EMBL/GenBank/DDBJ databases">
        <authorList>
            <person name="Fleischmann R.D."/>
            <person name="Dodson R.J."/>
            <person name="Haft D.H."/>
            <person name="Merkel J.S."/>
            <person name="Nelson W.C."/>
            <person name="Fraser C.M."/>
        </authorList>
    </citation>
    <scope>NUCLEOTIDE SEQUENCE [LARGE SCALE GENOMIC DNA]</scope>
    <source>
        <strain>ATCC 700084 / mc(2)155</strain>
    </source>
</reference>
<reference key="2">
    <citation type="journal article" date="2007" name="Genome Biol.">
        <title>Interrupted coding sequences in Mycobacterium smegmatis: authentic mutations or sequencing errors?</title>
        <authorList>
            <person name="Deshayes C."/>
            <person name="Perrodou E."/>
            <person name="Gallien S."/>
            <person name="Euphrasie D."/>
            <person name="Schaeffer C."/>
            <person name="Van-Dorsselaer A."/>
            <person name="Poch O."/>
            <person name="Lecompte O."/>
            <person name="Reyrat J.-M."/>
        </authorList>
    </citation>
    <scope>NUCLEOTIDE SEQUENCE [LARGE SCALE GENOMIC DNA]</scope>
    <source>
        <strain>ATCC 700084 / mc(2)155</strain>
    </source>
</reference>
<reference key="3">
    <citation type="journal article" date="2009" name="Genome Res.">
        <title>Ortho-proteogenomics: multiple proteomes investigation through orthology and a new MS-based protocol.</title>
        <authorList>
            <person name="Gallien S."/>
            <person name="Perrodou E."/>
            <person name="Carapito C."/>
            <person name="Deshayes C."/>
            <person name="Reyrat J.-M."/>
            <person name="Van Dorsselaer A."/>
            <person name="Poch O."/>
            <person name="Schaeffer C."/>
            <person name="Lecompte O."/>
        </authorList>
    </citation>
    <scope>NUCLEOTIDE SEQUENCE [LARGE SCALE GENOMIC DNA]</scope>
    <source>
        <strain>ATCC 700084 / mc(2)155</strain>
    </source>
</reference>
<reference key="4">
    <citation type="journal article" date="2017" name="MBio">
        <title>A novel calcium uptake transporter of uncharacterized P-type ATPase family supplies calcium for cell surface integrity in Mycobacterium smegmatis.</title>
        <authorList>
            <person name="Gupta H.K."/>
            <person name="Shrivastava S."/>
            <person name="Sharma R."/>
        </authorList>
    </citation>
    <scope>FUNCTION</scope>
    <scope>CATALYTIC ACTIVITY</scope>
    <scope>INDUCTION</scope>
    <scope>DISRUPTION PHENOTYPE</scope>
    <source>
        <strain>ATCC 700084 / mc(2)155</strain>
    </source>
</reference>
<keyword id="KW-0067">ATP-binding</keyword>
<keyword id="KW-0106">Calcium</keyword>
<keyword id="KW-0109">Calcium transport</keyword>
<keyword id="KW-1003">Cell membrane</keyword>
<keyword id="KW-0406">Ion transport</keyword>
<keyword id="KW-0460">Magnesium</keyword>
<keyword id="KW-0472">Membrane</keyword>
<keyword id="KW-0479">Metal-binding</keyword>
<keyword id="KW-0547">Nucleotide-binding</keyword>
<keyword id="KW-0597">Phosphoprotein</keyword>
<keyword id="KW-1185">Reference proteome</keyword>
<keyword id="KW-1278">Translocase</keyword>
<keyword id="KW-0812">Transmembrane</keyword>
<keyword id="KW-1133">Transmembrane helix</keyword>
<keyword id="KW-0813">Transport</keyword>
<protein>
    <recommendedName>
        <fullName evidence="5">Calcium-transporting ATPase CtpE</fullName>
        <ecNumber evidence="3">7.2.2.10</ecNumber>
    </recommendedName>
    <alternativeName>
        <fullName evidence="4">Calcium uptake transporter</fullName>
    </alternativeName>
</protein>
<feature type="chain" id="PRO_0000443813" description="Calcium-transporting ATPase CtpE">
    <location>
        <begin position="1"/>
        <end position="791"/>
    </location>
</feature>
<feature type="transmembrane region" description="Helical" evidence="2">
    <location>
        <begin position="53"/>
        <end position="73"/>
    </location>
</feature>
<feature type="transmembrane region" description="Helical" evidence="2">
    <location>
        <begin position="213"/>
        <end position="233"/>
    </location>
</feature>
<feature type="transmembrane region" description="Helical" evidence="2">
    <location>
        <begin position="252"/>
        <end position="272"/>
    </location>
</feature>
<feature type="transmembrane region" description="Helical" evidence="2">
    <location>
        <begin position="596"/>
        <end position="616"/>
    </location>
</feature>
<feature type="transmembrane region" description="Helical" evidence="2">
    <location>
        <begin position="627"/>
        <end position="647"/>
    </location>
</feature>
<feature type="transmembrane region" description="Helical" evidence="2">
    <location>
        <begin position="664"/>
        <end position="684"/>
    </location>
</feature>
<feature type="transmembrane region" description="Helical" evidence="2">
    <location>
        <begin position="697"/>
        <end position="717"/>
    </location>
</feature>
<feature type="transmembrane region" description="Helical" evidence="2">
    <location>
        <begin position="725"/>
        <end position="745"/>
    </location>
</feature>
<feature type="transmembrane region" description="Helical" evidence="2">
    <location>
        <begin position="757"/>
        <end position="777"/>
    </location>
</feature>
<feature type="active site" description="4-aspartylphosphate intermediate" evidence="1">
    <location>
        <position position="299"/>
    </location>
</feature>
<feature type="binding site" evidence="1">
    <location>
        <position position="299"/>
    </location>
    <ligand>
        <name>Mg(2+)</name>
        <dbReference type="ChEBI" id="CHEBI:18420"/>
    </ligand>
</feature>
<feature type="binding site" evidence="1">
    <location>
        <position position="301"/>
    </location>
    <ligand>
        <name>Mg(2+)</name>
        <dbReference type="ChEBI" id="CHEBI:18420"/>
    </ligand>
</feature>
<feature type="binding site" evidence="1">
    <location>
        <position position="530"/>
    </location>
    <ligand>
        <name>Mg(2+)</name>
        <dbReference type="ChEBI" id="CHEBI:18420"/>
    </ligand>
</feature>
<dbReference type="EC" id="7.2.2.10" evidence="3"/>
<dbReference type="EMBL" id="CP000480">
    <property type="protein sequence ID" value="ABK72389.1"/>
    <property type="molecule type" value="Genomic_DNA"/>
</dbReference>
<dbReference type="EMBL" id="CP001663">
    <property type="protein sequence ID" value="AFP41926.1"/>
    <property type="molecule type" value="Genomic_DNA"/>
</dbReference>
<dbReference type="RefSeq" id="WP_011730674.1">
    <property type="nucleotide sequence ID" value="NZ_SIJM01000034.1"/>
</dbReference>
<dbReference type="RefSeq" id="YP_889870.1">
    <property type="nucleotide sequence ID" value="NC_008596.1"/>
</dbReference>
<dbReference type="SMR" id="A0R3Y2"/>
<dbReference type="STRING" id="246196.MSMEG_5636"/>
<dbReference type="PaxDb" id="246196-MSMEI_5486"/>
<dbReference type="KEGG" id="msb:LJ00_27870"/>
<dbReference type="KEGG" id="msg:MSMEI_5486"/>
<dbReference type="KEGG" id="msm:MSMEG_5636"/>
<dbReference type="PATRIC" id="fig|246196.19.peg.5492"/>
<dbReference type="eggNOG" id="COG0474">
    <property type="taxonomic scope" value="Bacteria"/>
</dbReference>
<dbReference type="OrthoDB" id="9814270at2"/>
<dbReference type="Proteomes" id="UP000000757">
    <property type="component" value="Chromosome"/>
</dbReference>
<dbReference type="Proteomes" id="UP000006158">
    <property type="component" value="Chromosome"/>
</dbReference>
<dbReference type="GO" id="GO:0005886">
    <property type="term" value="C:plasma membrane"/>
    <property type="evidence" value="ECO:0007669"/>
    <property type="project" value="UniProtKB-SubCell"/>
</dbReference>
<dbReference type="GO" id="GO:0005524">
    <property type="term" value="F:ATP binding"/>
    <property type="evidence" value="ECO:0007669"/>
    <property type="project" value="UniProtKB-KW"/>
</dbReference>
<dbReference type="GO" id="GO:0016887">
    <property type="term" value="F:ATP hydrolysis activity"/>
    <property type="evidence" value="ECO:0007669"/>
    <property type="project" value="InterPro"/>
</dbReference>
<dbReference type="GO" id="GO:0046872">
    <property type="term" value="F:metal ion binding"/>
    <property type="evidence" value="ECO:0007669"/>
    <property type="project" value="UniProtKB-KW"/>
</dbReference>
<dbReference type="GO" id="GO:0005388">
    <property type="term" value="F:P-type calcium transporter activity"/>
    <property type="evidence" value="ECO:0007669"/>
    <property type="project" value="UniProtKB-EC"/>
</dbReference>
<dbReference type="CDD" id="cd02609">
    <property type="entry name" value="P-type_ATPase"/>
    <property type="match status" value="1"/>
</dbReference>
<dbReference type="FunFam" id="2.70.150.10:FF:000075">
    <property type="entry name" value="Metal cation transporter P-type ATPase"/>
    <property type="match status" value="1"/>
</dbReference>
<dbReference type="Gene3D" id="3.40.1110.10">
    <property type="entry name" value="Calcium-transporting ATPase, cytoplasmic domain N"/>
    <property type="match status" value="1"/>
</dbReference>
<dbReference type="Gene3D" id="2.70.150.10">
    <property type="entry name" value="Calcium-transporting ATPase, cytoplasmic transduction domain A"/>
    <property type="match status" value="1"/>
</dbReference>
<dbReference type="Gene3D" id="1.20.1110.10">
    <property type="entry name" value="Calcium-transporting ATPase, transmembrane domain"/>
    <property type="match status" value="1"/>
</dbReference>
<dbReference type="Gene3D" id="3.40.50.1000">
    <property type="entry name" value="HAD superfamily/HAD-like"/>
    <property type="match status" value="1"/>
</dbReference>
<dbReference type="InterPro" id="IPR023299">
    <property type="entry name" value="ATPase_P-typ_cyto_dom_N"/>
</dbReference>
<dbReference type="InterPro" id="IPR018303">
    <property type="entry name" value="ATPase_P-typ_P_site"/>
</dbReference>
<dbReference type="InterPro" id="IPR023298">
    <property type="entry name" value="ATPase_P-typ_TM_dom_sf"/>
</dbReference>
<dbReference type="InterPro" id="IPR008250">
    <property type="entry name" value="ATPase_P-typ_transduc_dom_A_sf"/>
</dbReference>
<dbReference type="InterPro" id="IPR036412">
    <property type="entry name" value="HAD-like_sf"/>
</dbReference>
<dbReference type="InterPro" id="IPR023214">
    <property type="entry name" value="HAD_sf"/>
</dbReference>
<dbReference type="InterPro" id="IPR001757">
    <property type="entry name" value="P_typ_ATPase"/>
</dbReference>
<dbReference type="InterPro" id="IPR044492">
    <property type="entry name" value="P_typ_ATPase_HD_dom"/>
</dbReference>
<dbReference type="NCBIfam" id="TIGR01494">
    <property type="entry name" value="ATPase_P-type"/>
    <property type="match status" value="2"/>
</dbReference>
<dbReference type="PANTHER" id="PTHR42861">
    <property type="entry name" value="CALCIUM-TRANSPORTING ATPASE"/>
    <property type="match status" value="1"/>
</dbReference>
<dbReference type="Pfam" id="PF00122">
    <property type="entry name" value="E1-E2_ATPase"/>
    <property type="match status" value="1"/>
</dbReference>
<dbReference type="Pfam" id="PF00702">
    <property type="entry name" value="Hydrolase"/>
    <property type="match status" value="1"/>
</dbReference>
<dbReference type="PRINTS" id="PR00119">
    <property type="entry name" value="CATATPASE"/>
</dbReference>
<dbReference type="SFLD" id="SFLDG00002">
    <property type="entry name" value="C1.7:_P-type_atpase_like"/>
    <property type="match status" value="1"/>
</dbReference>
<dbReference type="SFLD" id="SFLDF00027">
    <property type="entry name" value="p-type_atpase"/>
    <property type="match status" value="1"/>
</dbReference>
<dbReference type="SUPFAM" id="SSF81653">
    <property type="entry name" value="Calcium ATPase, transduction domain A"/>
    <property type="match status" value="1"/>
</dbReference>
<dbReference type="SUPFAM" id="SSF81665">
    <property type="entry name" value="Calcium ATPase, transmembrane domain M"/>
    <property type="match status" value="1"/>
</dbReference>
<dbReference type="SUPFAM" id="SSF56784">
    <property type="entry name" value="HAD-like"/>
    <property type="match status" value="1"/>
</dbReference>
<dbReference type="PROSITE" id="PS00154">
    <property type="entry name" value="ATPASE_E1_E2"/>
    <property type="match status" value="1"/>
</dbReference>
<comment type="function">
    <text evidence="3">P-type ATPase involved in specific uptake of calcium. Essential for growth and maintenance of cell surface integrity under Ca(2+)-deficient conditions.</text>
</comment>
<comment type="catalytic activity">
    <reaction evidence="3">
        <text>Ca(2+)(in) + ATP + H2O = Ca(2+)(out) + ADP + phosphate + H(+)</text>
        <dbReference type="Rhea" id="RHEA:18105"/>
        <dbReference type="ChEBI" id="CHEBI:15377"/>
        <dbReference type="ChEBI" id="CHEBI:15378"/>
        <dbReference type="ChEBI" id="CHEBI:29108"/>
        <dbReference type="ChEBI" id="CHEBI:30616"/>
        <dbReference type="ChEBI" id="CHEBI:43474"/>
        <dbReference type="ChEBI" id="CHEBI:456216"/>
        <dbReference type="EC" id="7.2.2.10"/>
    </reaction>
</comment>
<comment type="subcellular location">
    <subcellularLocation>
        <location evidence="5">Cell membrane</location>
        <topology evidence="2">Multi-pass membrane protein</topology>
    </subcellularLocation>
</comment>
<comment type="induction">
    <text evidence="3">Expression is negatively regulated by Ca(2+).</text>
</comment>
<comment type="disruption phenotype">
    <text evidence="3">Disruption of the gene leads to impaired growth under Ca(2+)-deficient conditions. Mutant also shows hypersensitivity to polymyxin B, increased biofilm formation and higher cell aggregation, indicating cell envelope defects.</text>
</comment>
<comment type="similarity">
    <text evidence="5">Belongs to the cation transport ATPase (P-type) (TC 3.A.3) family.</text>
</comment>
<organism>
    <name type="scientific">Mycolicibacterium smegmatis (strain ATCC 700084 / mc(2)155)</name>
    <name type="common">Mycobacterium smegmatis</name>
    <dbReference type="NCBI Taxonomy" id="246196"/>
    <lineage>
        <taxon>Bacteria</taxon>
        <taxon>Bacillati</taxon>
        <taxon>Actinomycetota</taxon>
        <taxon>Actinomycetes</taxon>
        <taxon>Mycobacteriales</taxon>
        <taxon>Mycobacteriaceae</taxon>
        <taxon>Mycolicibacterium</taxon>
    </lineage>
</organism>
<gene>
    <name evidence="7" type="primary">ctpE</name>
    <name evidence="6" type="ordered locus">MSMEG_5636</name>
    <name evidence="7" type="ordered locus">MSMEI_5486</name>
</gene>
<sequence>MTTMAAAGLTDAEVAQRIAEGKTNDVPTRAARTVSEIVRANVFTRINAILGVLFVIVLSTGSVINGAFGLLIIANSAIGIIQEIRAKQTLDKLAIVGQAKPTVRRQSGTRAVLPSEVVLDDIIELGPGDQIVVDGEVVEETNLEVDESLLTGEADPIAKDAGDPVMSGSFVVAGSGAYRATKVGREAYAAKLAEEASKFTLVKSELRNGINKILQFITYLLVPAGLLTIYTQLFTTDAGWREAVLRMVGALVPMVPEGLVLMTSIAFAVGVVRLGRRQCLVNELPAIEGLARVDVVCADKTGTLTENGMRVSDLKSLTEGHVADVLAQLASDDARPNASMAAIAEAYQTPPGWSATATAPFKSATKWSGTSYGEHGNWVIGAPDVLLDPASPVAEEAERIGAQGLRVLLLGSSDRSVDAPDAPGVVTPAALVVLEQRIRPDAGDTLDYFASQHVSVKVISGDNAVSVGAVAGKLGLHGETMDARRLPEQPEKLAETLEECTTFGRVRPDQKRAMVHALQSRGHTVAMTGDGVNDVLALKDSDIGVAMGSGSSASRAVAQIVLLDNKFATLPYVVGEGRRVIGNIERVSNLFLTKTVYSVLLAILVGIGGLSAKIFGTDPLLFPFQPIHVTIAAWFTIGIPAFILSLAPNNERAKTGFVRRVMTAALPSGLVVGTATFVSYLVAYQGREATPVEQTQASTAALITLLASSLWVLAVVARPYQWWRVLLVACSMLAYVLIFSIPLAQELFMLDPTNMKVTSVALGIGLAGAALIEVLWWVQGRVLGEERRVWR</sequence>
<evidence type="ECO:0000250" key="1">
    <source>
        <dbReference type="UniProtKB" id="Q5ZWR1"/>
    </source>
</evidence>
<evidence type="ECO:0000255" key="2"/>
<evidence type="ECO:0000269" key="3">
    <source>
    </source>
</evidence>
<evidence type="ECO:0000303" key="4">
    <source>
    </source>
</evidence>
<evidence type="ECO:0000305" key="5"/>
<evidence type="ECO:0000312" key="6">
    <source>
        <dbReference type="EMBL" id="ABK72389.1"/>
    </source>
</evidence>
<evidence type="ECO:0000312" key="7">
    <source>
        <dbReference type="EMBL" id="AFP41926.1"/>
    </source>
</evidence>